<reference key="1">
    <citation type="submission" date="2006-03" db="EMBL/GenBank/DDBJ databases">
        <title>Complete genome sequence of Francisella tularensis LVS (Live Vaccine Strain).</title>
        <authorList>
            <person name="Chain P."/>
            <person name="Larimer F."/>
            <person name="Land M."/>
            <person name="Stilwagen S."/>
            <person name="Larsson P."/>
            <person name="Bearden S."/>
            <person name="Chu M."/>
            <person name="Oyston P."/>
            <person name="Forsman M."/>
            <person name="Andersson S."/>
            <person name="Lindler L."/>
            <person name="Titball R."/>
            <person name="Garcia E."/>
        </authorList>
    </citation>
    <scope>NUCLEOTIDE SEQUENCE [LARGE SCALE GENOMIC DNA]</scope>
    <source>
        <strain>LVS</strain>
    </source>
</reference>
<comment type="function">
    <text evidence="1">Catalyzes oxygen-dependent 5-hydroxyuridine (ho5U) modification at position 34 in tRNAs.</text>
</comment>
<comment type="catalytic activity">
    <reaction evidence="1">
        <text>uridine(34) in tRNA + AH2 + O2 = 5-hydroxyuridine(34) in tRNA + A + H2O</text>
        <dbReference type="Rhea" id="RHEA:64224"/>
        <dbReference type="Rhea" id="RHEA-COMP:11727"/>
        <dbReference type="Rhea" id="RHEA-COMP:13381"/>
        <dbReference type="ChEBI" id="CHEBI:13193"/>
        <dbReference type="ChEBI" id="CHEBI:15377"/>
        <dbReference type="ChEBI" id="CHEBI:15379"/>
        <dbReference type="ChEBI" id="CHEBI:17499"/>
        <dbReference type="ChEBI" id="CHEBI:65315"/>
        <dbReference type="ChEBI" id="CHEBI:136877"/>
    </reaction>
</comment>
<comment type="similarity">
    <text evidence="1">Belongs to the TrhO family.</text>
</comment>
<sequence>MSQIVVCAMYKFVTLEDFEAMRQPLLDTMIKNNVKGTLLLANEGINGTVAGTRESIDNLLAYLKADPRLVDIDYKESYHQEMPFYRSKVKLKKEIVTLGIDEIDPNKICGKYVEPKDWNDLISDPETVLIDTRNEYEIEIGTFKNAINPHTENFREFPQYVDENLDPKKHKKVAMFCTGGIRCEKSTALLKAKGFDEVYHLKGGILKYLEEVPKEKSMWQGECFVFDSRVAVNHDLEKGNYDQCFACRMPITEDDKKRPEYVKGISCHHCYDKVTEKQKARFAEREKQSQLAAEKGFSHVGDEAKKLAQLNKQKKQQAKEAARKKAQQ</sequence>
<organism>
    <name type="scientific">Francisella tularensis subsp. holarctica (strain LVS)</name>
    <dbReference type="NCBI Taxonomy" id="376619"/>
    <lineage>
        <taxon>Bacteria</taxon>
        <taxon>Pseudomonadati</taxon>
        <taxon>Pseudomonadota</taxon>
        <taxon>Gammaproteobacteria</taxon>
        <taxon>Thiotrichales</taxon>
        <taxon>Francisellaceae</taxon>
        <taxon>Francisella</taxon>
    </lineage>
</organism>
<accession>Q2A397</accession>
<dbReference type="EC" id="1.14.-.-" evidence="1"/>
<dbReference type="EMBL" id="AM233362">
    <property type="protein sequence ID" value="CAJ79557.1"/>
    <property type="molecule type" value="Genomic_DNA"/>
</dbReference>
<dbReference type="RefSeq" id="WP_003016080.1">
    <property type="nucleotide sequence ID" value="NZ_CP009694.1"/>
</dbReference>
<dbReference type="SMR" id="Q2A397"/>
<dbReference type="KEGG" id="ftl:FTL_1118"/>
<dbReference type="Proteomes" id="UP000001944">
    <property type="component" value="Chromosome"/>
</dbReference>
<dbReference type="GO" id="GO:0016705">
    <property type="term" value="F:oxidoreductase activity, acting on paired donors, with incorporation or reduction of molecular oxygen"/>
    <property type="evidence" value="ECO:0007669"/>
    <property type="project" value="UniProtKB-UniRule"/>
</dbReference>
<dbReference type="GO" id="GO:0006400">
    <property type="term" value="P:tRNA modification"/>
    <property type="evidence" value="ECO:0007669"/>
    <property type="project" value="UniProtKB-UniRule"/>
</dbReference>
<dbReference type="CDD" id="cd01518">
    <property type="entry name" value="RHOD_YceA"/>
    <property type="match status" value="1"/>
</dbReference>
<dbReference type="Gene3D" id="3.30.70.100">
    <property type="match status" value="1"/>
</dbReference>
<dbReference type="Gene3D" id="3.40.250.10">
    <property type="entry name" value="Rhodanese-like domain"/>
    <property type="match status" value="1"/>
</dbReference>
<dbReference type="HAMAP" id="MF_00469">
    <property type="entry name" value="TrhO"/>
    <property type="match status" value="1"/>
</dbReference>
<dbReference type="InterPro" id="IPR001763">
    <property type="entry name" value="Rhodanese-like_dom"/>
</dbReference>
<dbReference type="InterPro" id="IPR036873">
    <property type="entry name" value="Rhodanese-like_dom_sf"/>
</dbReference>
<dbReference type="InterPro" id="IPR020936">
    <property type="entry name" value="TrhO"/>
</dbReference>
<dbReference type="InterPro" id="IPR040503">
    <property type="entry name" value="TRHO_N"/>
</dbReference>
<dbReference type="NCBIfam" id="NF001136">
    <property type="entry name" value="PRK00142.1-4"/>
    <property type="match status" value="1"/>
</dbReference>
<dbReference type="PANTHER" id="PTHR43268:SF3">
    <property type="entry name" value="RHODANESE-LIKE DOMAIN-CONTAINING PROTEIN 7-RELATED"/>
    <property type="match status" value="1"/>
</dbReference>
<dbReference type="PANTHER" id="PTHR43268">
    <property type="entry name" value="THIOSULFATE SULFURTRANSFERASE/RHODANESE-LIKE DOMAIN-CONTAINING PROTEIN 2"/>
    <property type="match status" value="1"/>
</dbReference>
<dbReference type="Pfam" id="PF00581">
    <property type="entry name" value="Rhodanese"/>
    <property type="match status" value="1"/>
</dbReference>
<dbReference type="Pfam" id="PF17773">
    <property type="entry name" value="UPF0176_N"/>
    <property type="match status" value="1"/>
</dbReference>
<dbReference type="SMART" id="SM00450">
    <property type="entry name" value="RHOD"/>
    <property type="match status" value="1"/>
</dbReference>
<dbReference type="SUPFAM" id="SSF52821">
    <property type="entry name" value="Rhodanese/Cell cycle control phosphatase"/>
    <property type="match status" value="1"/>
</dbReference>
<dbReference type="PROSITE" id="PS50206">
    <property type="entry name" value="RHODANESE_3"/>
    <property type="match status" value="1"/>
</dbReference>
<keyword id="KW-0560">Oxidoreductase</keyword>
<keyword id="KW-1185">Reference proteome</keyword>
<keyword id="KW-0819">tRNA processing</keyword>
<evidence type="ECO:0000255" key="1">
    <source>
        <dbReference type="HAMAP-Rule" id="MF_00469"/>
    </source>
</evidence>
<evidence type="ECO:0000256" key="2">
    <source>
        <dbReference type="SAM" id="MobiDB-lite"/>
    </source>
</evidence>
<proteinExistence type="inferred from homology"/>
<feature type="chain" id="PRO_0000242922" description="tRNA uridine(34) hydroxylase">
    <location>
        <begin position="1"/>
        <end position="328"/>
    </location>
</feature>
<feature type="domain" description="Rhodanese" evidence="1">
    <location>
        <begin position="123"/>
        <end position="217"/>
    </location>
</feature>
<feature type="region of interest" description="Disordered" evidence="2">
    <location>
        <begin position="304"/>
        <end position="328"/>
    </location>
</feature>
<feature type="compositionally biased region" description="Basic and acidic residues" evidence="2">
    <location>
        <begin position="317"/>
        <end position="328"/>
    </location>
</feature>
<feature type="active site" description="Cysteine persulfide intermediate" evidence="1">
    <location>
        <position position="177"/>
    </location>
</feature>
<gene>
    <name evidence="1" type="primary">trhO</name>
    <name type="ordered locus">FTL_1118</name>
</gene>
<protein>
    <recommendedName>
        <fullName evidence="1">tRNA uridine(34) hydroxylase</fullName>
        <ecNumber evidence="1">1.14.-.-</ecNumber>
    </recommendedName>
    <alternativeName>
        <fullName evidence="1">tRNA hydroxylation protein O</fullName>
    </alternativeName>
</protein>
<name>TRHO_FRATH</name>